<proteinExistence type="evidence at protein level"/>
<feature type="chain" id="PRO_0000096734" description="Respiratory nitrate reductase 2 beta chain">
    <location>
        <begin position="1"/>
        <end position="514"/>
    </location>
</feature>
<feature type="domain" description="4Fe-4S ferredoxin-type 1" evidence="2">
    <location>
        <begin position="7"/>
        <end position="35"/>
    </location>
</feature>
<feature type="domain" description="4Fe-4S ferredoxin-type 2" evidence="2">
    <location>
        <begin position="174"/>
        <end position="205"/>
    </location>
</feature>
<feature type="domain" description="4Fe-4S ferredoxin-type 3" evidence="2">
    <location>
        <begin position="207"/>
        <end position="236"/>
    </location>
</feature>
<feature type="binding site" evidence="1">
    <location>
        <position position="16"/>
    </location>
    <ligand>
        <name>[4Fe-4S] cluster</name>
        <dbReference type="ChEBI" id="CHEBI:49883"/>
        <label>1</label>
    </ligand>
</feature>
<feature type="binding site" evidence="1">
    <location>
        <position position="19"/>
    </location>
    <ligand>
        <name>[4Fe-4S] cluster</name>
        <dbReference type="ChEBI" id="CHEBI:49883"/>
        <label>1</label>
    </ligand>
</feature>
<feature type="binding site" evidence="1">
    <location>
        <position position="22"/>
    </location>
    <ligand>
        <name>[4Fe-4S] cluster</name>
        <dbReference type="ChEBI" id="CHEBI:49883"/>
        <label>1</label>
    </ligand>
</feature>
<feature type="binding site" evidence="1">
    <location>
        <position position="26"/>
    </location>
    <ligand>
        <name>[4Fe-4S] cluster</name>
        <dbReference type="ChEBI" id="CHEBI:49883"/>
        <label>2</label>
    </ligand>
</feature>
<feature type="binding site" evidence="1">
    <location>
        <position position="183"/>
    </location>
    <ligand>
        <name>[4Fe-4S] cluster</name>
        <dbReference type="ChEBI" id="CHEBI:49883"/>
        <label>3</label>
    </ligand>
</feature>
<feature type="binding site" evidence="1">
    <location>
        <position position="186"/>
    </location>
    <ligand>
        <name>[4Fe-4S] cluster</name>
        <dbReference type="ChEBI" id="CHEBI:49883"/>
        <label>3</label>
    </ligand>
</feature>
<feature type="binding site" evidence="1">
    <location>
        <position position="191"/>
    </location>
    <ligand>
        <name>[4Fe-4S] cluster</name>
        <dbReference type="ChEBI" id="CHEBI:49883"/>
        <label>3</label>
    </ligand>
</feature>
<feature type="binding site" evidence="1">
    <location>
        <position position="195"/>
    </location>
    <ligand>
        <name>[3Fe-4S] cluster</name>
        <dbReference type="ChEBI" id="CHEBI:21137"/>
    </ligand>
</feature>
<feature type="binding site" evidence="1">
    <location>
        <position position="216"/>
    </location>
    <ligand>
        <name>[3Fe-4S] cluster</name>
        <dbReference type="ChEBI" id="CHEBI:21137"/>
    </ligand>
</feature>
<feature type="binding site" evidence="1">
    <location>
        <position position="222"/>
    </location>
    <ligand>
        <name>[3Fe-4S] cluster</name>
        <dbReference type="ChEBI" id="CHEBI:21137"/>
    </ligand>
</feature>
<feature type="binding site" evidence="1">
    <location>
        <position position="226"/>
    </location>
    <ligand>
        <name>[4Fe-4S] cluster</name>
        <dbReference type="ChEBI" id="CHEBI:49883"/>
        <label>3</label>
    </ligand>
</feature>
<feature type="binding site" evidence="1">
    <location>
        <position position="243"/>
    </location>
    <ligand>
        <name>[4Fe-4S] cluster</name>
        <dbReference type="ChEBI" id="CHEBI:49883"/>
        <label>2</label>
    </ligand>
</feature>
<feature type="binding site" evidence="1">
    <location>
        <position position="246"/>
    </location>
    <ligand>
        <name>[4Fe-4S] cluster</name>
        <dbReference type="ChEBI" id="CHEBI:49883"/>
        <label>2</label>
    </ligand>
</feature>
<feature type="binding site" evidence="1">
    <location>
        <position position="258"/>
    </location>
    <ligand>
        <name>[4Fe-4S] cluster</name>
        <dbReference type="ChEBI" id="CHEBI:49883"/>
        <label>2</label>
    </ligand>
</feature>
<feature type="binding site" evidence="1">
    <location>
        <position position="262"/>
    </location>
    <ligand>
        <name>[4Fe-4S] cluster</name>
        <dbReference type="ChEBI" id="CHEBI:49883"/>
        <label>1</label>
    </ligand>
</feature>
<feature type="sequence conflict" description="In Ref. 1; CAA34965." evidence="3" ref="1">
    <original>QR</original>
    <variation>HG</variation>
    <location>
        <begin position="325"/>
        <end position="326"/>
    </location>
</feature>
<accession>P19318</accession>
<accession>P78267</accession>
<evidence type="ECO:0000250" key="1"/>
<evidence type="ECO:0000255" key="2">
    <source>
        <dbReference type="PROSITE-ProRule" id="PRU00711"/>
    </source>
</evidence>
<evidence type="ECO:0000305" key="3"/>
<comment type="function">
    <text>This is a second nitrate reductase enzyme which can substitute for the NRA enzyme and allows E.coli to use nitrate as an electron acceptor during anaerobic growth. The beta chain is an electron transfer unit containing four cysteine clusters involved in the formation of iron-sulfur centers. Electrons are transferred from the gamma chain to the molybdenum cofactor of the alpha subunit.</text>
</comment>
<comment type="catalytic activity">
    <reaction>
        <text>nitrate + a quinol = a quinone + nitrite + H2O</text>
        <dbReference type="Rhea" id="RHEA:56144"/>
        <dbReference type="ChEBI" id="CHEBI:15377"/>
        <dbReference type="ChEBI" id="CHEBI:16301"/>
        <dbReference type="ChEBI" id="CHEBI:17632"/>
        <dbReference type="ChEBI" id="CHEBI:24646"/>
        <dbReference type="ChEBI" id="CHEBI:132124"/>
        <dbReference type="EC" id="1.7.5.1"/>
    </reaction>
</comment>
<comment type="cofactor">
    <cofactor evidence="1">
        <name>[4Fe-4S] cluster</name>
        <dbReference type="ChEBI" id="CHEBI:49883"/>
    </cofactor>
    <text evidence="1">Binds 3 [4Fe-4S] clusters per subunit.</text>
</comment>
<comment type="cofactor">
    <cofactor evidence="1">
        <name>[3Fe-4S] cluster</name>
        <dbReference type="ChEBI" id="CHEBI:21137"/>
    </cofactor>
    <text evidence="1">Binds 1 [3Fe-4S] cluster per subunit.</text>
</comment>
<comment type="subunit">
    <text>Dimer of heterotrimers each composed of an alpha, a beta and a gamma chain. Alpha and beta are catalytic chains; gamma chains are involved in binding the enzyme complex to the cytoplasmic membrane.</text>
</comment>
<comment type="interaction">
    <interactant intactId="EBI-555059">
        <id>P19318</id>
    </interactant>
    <interactant intactId="EBI-561933">
        <id>P42593</id>
        <label>fadH</label>
    </interactant>
    <organismsDiffer>false</organismsDiffer>
    <experiments>3</experiments>
</comment>
<comment type="interaction">
    <interactant intactId="EBI-555059">
        <id>P19318</id>
    </interactant>
    <interactant intactId="EBI-547248">
        <id>P09152</id>
        <label>narG</label>
    </interactant>
    <organismsDiffer>false</organismsDiffer>
    <experiments>5</experiments>
</comment>
<comment type="interaction">
    <interactant intactId="EBI-555059">
        <id>P19318</id>
    </interactant>
    <interactant intactId="EBI-555067">
        <id>P11349</id>
        <label>narH</label>
    </interactant>
    <organismsDiffer>false</organismsDiffer>
    <experiments>3</experiments>
</comment>
<comment type="interaction">
    <interactant intactId="EBI-555059">
        <id>P19318</id>
    </interactant>
    <interactant intactId="EBI-555088">
        <id>P19317</id>
        <label>narW</label>
    </interactant>
    <organismsDiffer>false</organismsDiffer>
    <experiments>4</experiments>
</comment>
<comment type="interaction">
    <interactant intactId="EBI-555059">
        <id>P19318</id>
    </interactant>
    <interactant intactId="EBI-545385">
        <id>P04825</id>
        <label>pepN</label>
    </interactant>
    <organismsDiffer>false</organismsDiffer>
    <experiments>3</experiments>
</comment>
<comment type="subcellular location">
    <subcellularLocation>
        <location>Cell membrane</location>
        <topology>Peripheral membrane protein</topology>
    </subcellularLocation>
</comment>
<gene>
    <name type="primary">narY</name>
    <name type="ordered locus">b1467</name>
    <name type="ordered locus">JW1462</name>
</gene>
<name>NARY_ECOLI</name>
<keyword id="KW-0003">3Fe-4S</keyword>
<keyword id="KW-0004">4Fe-4S</keyword>
<keyword id="KW-1003">Cell membrane</keyword>
<keyword id="KW-0903">Direct protein sequencing</keyword>
<keyword id="KW-0249">Electron transport</keyword>
<keyword id="KW-0408">Iron</keyword>
<keyword id="KW-0411">Iron-sulfur</keyword>
<keyword id="KW-0472">Membrane</keyword>
<keyword id="KW-0479">Metal-binding</keyword>
<keyword id="KW-0534">Nitrate assimilation</keyword>
<keyword id="KW-0560">Oxidoreductase</keyword>
<keyword id="KW-1185">Reference proteome</keyword>
<keyword id="KW-0677">Repeat</keyword>
<keyword id="KW-0813">Transport</keyword>
<sequence>MKIRSQVGMVLNLDKCIGCHTCSVTCKNVWTGREGMEYAWFNNVETKPGIGYPKNWEDQEEWQGGWVRDVNGKIRPRLGNKMGVITKIFANPVVPQIDDYYEPFTFDYEHLHSAPEGKHIPTARPRSLIDGKRMDKVIWGPNWEELLGGEFEKRARDRNFEAMQKEMYGQFENTFMMYLPRLCEHCLNPSCVATCPSGAIYKREEDGIVLIDQDKCRGWRLCISGCPYKKIYFNWKSGKSEKCIFCYPRIESGQPTVCSETCVGRIRYLGVLLYDADRIEEAASTEREVDLYERQCEVFLDPHDPSVIEEALKQGIPQNVIDAAQRSPVYKMAMDWKLALPLHPEYRTLPMVWYVPPLSPIQSYADAGGLPKSEGVLPAIESLRIPVQYLANMLSAGDTGPVLRALKRMMAMRHYMRSQTVEGVTDTRAIDEVGLSVAQVEEMYRYLAIANYEDRFVIPTSHREMAGDAFAERNGCGFTFGDGCHGSDSKFNLFNSSRIDAINITEVRDKAEGE</sequence>
<organism>
    <name type="scientific">Escherichia coli (strain K12)</name>
    <dbReference type="NCBI Taxonomy" id="83333"/>
    <lineage>
        <taxon>Bacteria</taxon>
        <taxon>Pseudomonadati</taxon>
        <taxon>Pseudomonadota</taxon>
        <taxon>Gammaproteobacteria</taxon>
        <taxon>Enterobacterales</taxon>
        <taxon>Enterobacteriaceae</taxon>
        <taxon>Escherichia</taxon>
    </lineage>
</organism>
<protein>
    <recommendedName>
        <fullName>Respiratory nitrate reductase 2 beta chain</fullName>
        <ecNumber>1.7.5.1</ecNumber>
    </recommendedName>
</protein>
<dbReference type="EC" id="1.7.5.1"/>
<dbReference type="EMBL" id="X17110">
    <property type="protein sequence ID" value="CAA34965.1"/>
    <property type="molecule type" value="Genomic_DNA"/>
</dbReference>
<dbReference type="EMBL" id="U00096">
    <property type="protein sequence ID" value="AAC74549.1"/>
    <property type="molecule type" value="Genomic_DNA"/>
</dbReference>
<dbReference type="EMBL" id="AP009048">
    <property type="protein sequence ID" value="BAA15104.1"/>
    <property type="molecule type" value="Genomic_DNA"/>
</dbReference>
<dbReference type="PIR" id="F64899">
    <property type="entry name" value="F64899"/>
</dbReference>
<dbReference type="RefSeq" id="NP_415984.1">
    <property type="nucleotide sequence ID" value="NC_000913.3"/>
</dbReference>
<dbReference type="SMR" id="P19318"/>
<dbReference type="BioGRID" id="4262894">
    <property type="interactions" value="21"/>
</dbReference>
<dbReference type="BioGRID" id="850395">
    <property type="interactions" value="5"/>
</dbReference>
<dbReference type="ComplexPortal" id="CPX-5581">
    <property type="entry name" value="Nitrate reductase Z complex"/>
</dbReference>
<dbReference type="DIP" id="DIP-10323N"/>
<dbReference type="FunCoup" id="P19318">
    <property type="interactions" value="247"/>
</dbReference>
<dbReference type="IntAct" id="P19318">
    <property type="interactions" value="14"/>
</dbReference>
<dbReference type="STRING" id="511145.b1467"/>
<dbReference type="TCDB" id="5.A.3.1.2">
    <property type="family name" value="the prokaryotic molybdopterin-containing oxidoreductase (pmo) family"/>
</dbReference>
<dbReference type="jPOST" id="P19318"/>
<dbReference type="PaxDb" id="511145-b1467"/>
<dbReference type="EnsemblBacteria" id="AAC74549">
    <property type="protein sequence ID" value="AAC74549"/>
    <property type="gene ID" value="b1467"/>
</dbReference>
<dbReference type="GeneID" id="946034"/>
<dbReference type="KEGG" id="ecj:JW1462"/>
<dbReference type="KEGG" id="eco:b1467"/>
<dbReference type="KEGG" id="ecoc:C3026_08515"/>
<dbReference type="PATRIC" id="fig|1411691.4.peg.801"/>
<dbReference type="EchoBASE" id="EB0641"/>
<dbReference type="eggNOG" id="COG1140">
    <property type="taxonomic scope" value="Bacteria"/>
</dbReference>
<dbReference type="HOGENOM" id="CLU_043374_5_2_6"/>
<dbReference type="InParanoid" id="P19318"/>
<dbReference type="OMA" id="MAMRVYM"/>
<dbReference type="OrthoDB" id="9779457at2"/>
<dbReference type="PhylomeDB" id="P19318"/>
<dbReference type="BioCyc" id="EcoCyc:NARY-MONOMER"/>
<dbReference type="BioCyc" id="MetaCyc:NARY-MONOMER"/>
<dbReference type="PHI-base" id="PHI:10517"/>
<dbReference type="PRO" id="PR:P19318"/>
<dbReference type="Proteomes" id="UP000000625">
    <property type="component" value="Chromosome"/>
</dbReference>
<dbReference type="GO" id="GO:0016020">
    <property type="term" value="C:membrane"/>
    <property type="evidence" value="ECO:0000314"/>
    <property type="project" value="ComplexPortal"/>
</dbReference>
<dbReference type="GO" id="GO:0009325">
    <property type="term" value="C:nitrate reductase complex"/>
    <property type="evidence" value="ECO:0000314"/>
    <property type="project" value="EcoCyc"/>
</dbReference>
<dbReference type="GO" id="GO:0005886">
    <property type="term" value="C:plasma membrane"/>
    <property type="evidence" value="ECO:0007669"/>
    <property type="project" value="UniProtKB-SubCell"/>
</dbReference>
<dbReference type="GO" id="GO:0051538">
    <property type="term" value="F:3 iron, 4 sulfur cluster binding"/>
    <property type="evidence" value="ECO:0007669"/>
    <property type="project" value="UniProtKB-KW"/>
</dbReference>
<dbReference type="GO" id="GO:0051539">
    <property type="term" value="F:4 iron, 4 sulfur cluster binding"/>
    <property type="evidence" value="ECO:0007669"/>
    <property type="project" value="UniProtKB-KW"/>
</dbReference>
<dbReference type="GO" id="GO:0009055">
    <property type="term" value="F:electron transfer activity"/>
    <property type="evidence" value="ECO:0000255"/>
    <property type="project" value="EcoCyc"/>
</dbReference>
<dbReference type="GO" id="GO:0051536">
    <property type="term" value="F:iron-sulfur cluster binding"/>
    <property type="evidence" value="ECO:0000255"/>
    <property type="project" value="EcoCyc"/>
</dbReference>
<dbReference type="GO" id="GO:0046872">
    <property type="term" value="F:metal ion binding"/>
    <property type="evidence" value="ECO:0007669"/>
    <property type="project" value="UniProtKB-KW"/>
</dbReference>
<dbReference type="GO" id="GO:0160182">
    <property type="term" value="F:nitrate reductase (quinone) activity"/>
    <property type="evidence" value="ECO:0007669"/>
    <property type="project" value="UniProtKB-EC"/>
</dbReference>
<dbReference type="GO" id="GO:0008940">
    <property type="term" value="F:nitrate reductase activity"/>
    <property type="evidence" value="ECO:0000314"/>
    <property type="project" value="EcoCyc"/>
</dbReference>
<dbReference type="GO" id="GO:0019645">
    <property type="term" value="P:anaerobic electron transport chain"/>
    <property type="evidence" value="ECO:0000314"/>
    <property type="project" value="EcoCyc"/>
</dbReference>
<dbReference type="GO" id="GO:0009061">
    <property type="term" value="P:anaerobic respiration"/>
    <property type="evidence" value="ECO:0000314"/>
    <property type="project" value="EcoCyc"/>
</dbReference>
<dbReference type="GO" id="GO:0006974">
    <property type="term" value="P:DNA damage response"/>
    <property type="evidence" value="ECO:0000270"/>
    <property type="project" value="EcoliWiki"/>
</dbReference>
<dbReference type="GO" id="GO:0042128">
    <property type="term" value="P:nitrate assimilation"/>
    <property type="evidence" value="ECO:0007669"/>
    <property type="project" value="UniProtKB-KW"/>
</dbReference>
<dbReference type="GO" id="GO:0042126">
    <property type="term" value="P:nitrate metabolic process"/>
    <property type="evidence" value="ECO:0000303"/>
    <property type="project" value="ComplexPortal"/>
</dbReference>
<dbReference type="CDD" id="cd10557">
    <property type="entry name" value="NarH_beta-like"/>
    <property type="match status" value="1"/>
</dbReference>
<dbReference type="FunFam" id="3.30.70.20:FF:000005">
    <property type="entry name" value="Respiratory nitrate reductase beta subunit"/>
    <property type="match status" value="1"/>
</dbReference>
<dbReference type="FunFam" id="3.30.70.20:FF:000008">
    <property type="entry name" value="Respiratory nitrate reductase beta subunit"/>
    <property type="match status" value="1"/>
</dbReference>
<dbReference type="FunFam" id="3.30.70.20:FF:000010">
    <property type="entry name" value="Respiratory nitrate reductase beta subunit"/>
    <property type="match status" value="1"/>
</dbReference>
<dbReference type="FunFam" id="1.10.3650.10:FF:000001">
    <property type="entry name" value="Respiratory nitrate reductase subunit beta"/>
    <property type="match status" value="1"/>
</dbReference>
<dbReference type="Gene3D" id="3.30.70.20">
    <property type="match status" value="3"/>
</dbReference>
<dbReference type="Gene3D" id="1.10.3650.10">
    <property type="entry name" value="nitrate reductase domain like"/>
    <property type="match status" value="1"/>
</dbReference>
<dbReference type="InterPro" id="IPR017896">
    <property type="entry name" value="4Fe4S_Fe-S-bd"/>
</dbReference>
<dbReference type="InterPro" id="IPR029263">
    <property type="entry name" value="Nitr_red_bet_C"/>
</dbReference>
<dbReference type="InterPro" id="IPR038262">
    <property type="entry name" value="Nitr_red_bet_C_sf"/>
</dbReference>
<dbReference type="InterPro" id="IPR006547">
    <property type="entry name" value="NO3_Rdtase_bsu"/>
</dbReference>
<dbReference type="NCBIfam" id="TIGR01660">
    <property type="entry name" value="narH"/>
    <property type="match status" value="1"/>
</dbReference>
<dbReference type="PANTHER" id="PTHR43518">
    <property type="entry name" value="NITRATE REDUCTASE BETA SUBUNIT"/>
    <property type="match status" value="1"/>
</dbReference>
<dbReference type="PANTHER" id="PTHR43518:SF3">
    <property type="entry name" value="RESPIRATORY NITRATE REDUCTASE 2 BETA CHAIN"/>
    <property type="match status" value="1"/>
</dbReference>
<dbReference type="Pfam" id="PF13247">
    <property type="entry name" value="Fer4_11"/>
    <property type="match status" value="1"/>
</dbReference>
<dbReference type="Pfam" id="PF14711">
    <property type="entry name" value="Nitr_red_bet_C"/>
    <property type="match status" value="1"/>
</dbReference>
<dbReference type="SUPFAM" id="SSF54862">
    <property type="entry name" value="4Fe-4S ferredoxins"/>
    <property type="match status" value="1"/>
</dbReference>
<dbReference type="PROSITE" id="PS51379">
    <property type="entry name" value="4FE4S_FER_2"/>
    <property type="match status" value="3"/>
</dbReference>
<reference key="1">
    <citation type="journal article" date="1990" name="Mol. Gen. Genet.">
        <title>Nitrate reductases of Escherichia coli: sequence of the second nitrate reductase and comparison with that encoded by the narGHJI operon.</title>
        <authorList>
            <person name="Blasco F."/>
            <person name="Iobbi C."/>
            <person name="Ratouchniak J."/>
            <person name="Bonnefoy V."/>
            <person name="Chippaux M."/>
        </authorList>
    </citation>
    <scope>NUCLEOTIDE SEQUENCE [GENOMIC DNA]</scope>
    <scope>PROTEIN SEQUENCE OF 1-18</scope>
</reference>
<reference key="2">
    <citation type="journal article" date="1996" name="DNA Res.">
        <title>A 570-kb DNA sequence of the Escherichia coli K-12 genome corresponding to the 28.0-40.1 min region on the linkage map.</title>
        <authorList>
            <person name="Aiba H."/>
            <person name="Baba T."/>
            <person name="Fujita K."/>
            <person name="Hayashi K."/>
            <person name="Inada T."/>
            <person name="Isono K."/>
            <person name="Itoh T."/>
            <person name="Kasai H."/>
            <person name="Kashimoto K."/>
            <person name="Kimura S."/>
            <person name="Kitakawa M."/>
            <person name="Kitagawa M."/>
            <person name="Makino K."/>
            <person name="Miki T."/>
            <person name="Mizobuchi K."/>
            <person name="Mori H."/>
            <person name="Mori T."/>
            <person name="Motomura K."/>
            <person name="Nakade S."/>
            <person name="Nakamura Y."/>
            <person name="Nashimoto H."/>
            <person name="Nishio Y."/>
            <person name="Oshima T."/>
            <person name="Saito N."/>
            <person name="Sampei G."/>
            <person name="Seki Y."/>
            <person name="Sivasundaram S."/>
            <person name="Tagami H."/>
            <person name="Takeda J."/>
            <person name="Takemoto K."/>
            <person name="Takeuchi Y."/>
            <person name="Wada C."/>
            <person name="Yamamoto Y."/>
            <person name="Horiuchi T."/>
        </authorList>
    </citation>
    <scope>NUCLEOTIDE SEQUENCE [LARGE SCALE GENOMIC DNA]</scope>
    <source>
        <strain>K12 / W3110 / ATCC 27325 / DSM 5911</strain>
    </source>
</reference>
<reference key="3">
    <citation type="journal article" date="1997" name="Science">
        <title>The complete genome sequence of Escherichia coli K-12.</title>
        <authorList>
            <person name="Blattner F.R."/>
            <person name="Plunkett G. III"/>
            <person name="Bloch C.A."/>
            <person name="Perna N.T."/>
            <person name="Burland V."/>
            <person name="Riley M."/>
            <person name="Collado-Vides J."/>
            <person name="Glasner J.D."/>
            <person name="Rode C.K."/>
            <person name="Mayhew G.F."/>
            <person name="Gregor J."/>
            <person name="Davis N.W."/>
            <person name="Kirkpatrick H.A."/>
            <person name="Goeden M.A."/>
            <person name="Rose D.J."/>
            <person name="Mau B."/>
            <person name="Shao Y."/>
        </authorList>
    </citation>
    <scope>NUCLEOTIDE SEQUENCE [LARGE SCALE GENOMIC DNA]</scope>
    <source>
        <strain>K12 / MG1655 / ATCC 47076</strain>
    </source>
</reference>
<reference key="4">
    <citation type="journal article" date="2006" name="Mol. Syst. Biol.">
        <title>Highly accurate genome sequences of Escherichia coli K-12 strains MG1655 and W3110.</title>
        <authorList>
            <person name="Hayashi K."/>
            <person name="Morooka N."/>
            <person name="Yamamoto Y."/>
            <person name="Fujita K."/>
            <person name="Isono K."/>
            <person name="Choi S."/>
            <person name="Ohtsubo E."/>
            <person name="Baba T."/>
            <person name="Wanner B.L."/>
            <person name="Mori H."/>
            <person name="Horiuchi T."/>
        </authorList>
    </citation>
    <scope>NUCLEOTIDE SEQUENCE [LARGE SCALE GENOMIC DNA]</scope>
    <source>
        <strain>K12 / W3110 / ATCC 27325 / DSM 5911</strain>
    </source>
</reference>